<organism>
    <name type="scientific">Rhodospirillum centenum (strain ATCC 51521 / SW)</name>
    <dbReference type="NCBI Taxonomy" id="414684"/>
    <lineage>
        <taxon>Bacteria</taxon>
        <taxon>Pseudomonadati</taxon>
        <taxon>Pseudomonadota</taxon>
        <taxon>Alphaproteobacteria</taxon>
        <taxon>Rhodospirillales</taxon>
        <taxon>Rhodospirillaceae</taxon>
        <taxon>Rhodospirillum</taxon>
    </lineage>
</organism>
<accession>B6IN81</accession>
<name>RL9_RHOCS</name>
<comment type="function">
    <text evidence="1">Binds to the 23S rRNA.</text>
</comment>
<comment type="similarity">
    <text evidence="1">Belongs to the bacterial ribosomal protein bL9 family.</text>
</comment>
<reference key="1">
    <citation type="submission" date="2007-03" db="EMBL/GenBank/DDBJ databases">
        <title>Genome sequence of Rhodospirillum centenum.</title>
        <authorList>
            <person name="Touchman J.W."/>
            <person name="Bauer C."/>
            <person name="Blankenship R.E."/>
        </authorList>
    </citation>
    <scope>NUCLEOTIDE SEQUENCE [LARGE SCALE GENOMIC DNA]</scope>
    <source>
        <strain>ATCC 51521 / SW</strain>
    </source>
</reference>
<keyword id="KW-1185">Reference proteome</keyword>
<keyword id="KW-0687">Ribonucleoprotein</keyword>
<keyword id="KW-0689">Ribosomal protein</keyword>
<keyword id="KW-0694">RNA-binding</keyword>
<keyword id="KW-0699">rRNA-binding</keyword>
<sequence>MDVILLERVEKLGQMGQVVKVKPGFARNFLLPQKKALRATKENLAYFETQKARLEARNLELRKEAEQVAGSMGNVSVVITRQSGETGQLYGSVSSRDIADALAEKQIQVERRQVAIDQPIKTLGLFPVRIVLHPEVFVTITVNVARSADEAELQAQRGGMVTGLREEDEEEEVEETATEEGGEETAA</sequence>
<protein>
    <recommendedName>
        <fullName evidence="1">Large ribosomal subunit protein bL9</fullName>
    </recommendedName>
    <alternativeName>
        <fullName evidence="3">50S ribosomal protein L9</fullName>
    </alternativeName>
</protein>
<evidence type="ECO:0000255" key="1">
    <source>
        <dbReference type="HAMAP-Rule" id="MF_00503"/>
    </source>
</evidence>
<evidence type="ECO:0000256" key="2">
    <source>
        <dbReference type="SAM" id="MobiDB-lite"/>
    </source>
</evidence>
<evidence type="ECO:0000305" key="3"/>
<dbReference type="EMBL" id="CP000613">
    <property type="protein sequence ID" value="ACI98978.1"/>
    <property type="molecule type" value="Genomic_DNA"/>
</dbReference>
<dbReference type="RefSeq" id="WP_012566763.1">
    <property type="nucleotide sequence ID" value="NC_011420.2"/>
</dbReference>
<dbReference type="SMR" id="B6IN81"/>
<dbReference type="STRING" id="414684.RC1_1575"/>
<dbReference type="KEGG" id="rce:RC1_1575"/>
<dbReference type="eggNOG" id="COG0359">
    <property type="taxonomic scope" value="Bacteria"/>
</dbReference>
<dbReference type="HOGENOM" id="CLU_078938_1_0_5"/>
<dbReference type="OrthoDB" id="9788336at2"/>
<dbReference type="Proteomes" id="UP000001591">
    <property type="component" value="Chromosome"/>
</dbReference>
<dbReference type="GO" id="GO:1990904">
    <property type="term" value="C:ribonucleoprotein complex"/>
    <property type="evidence" value="ECO:0007669"/>
    <property type="project" value="UniProtKB-KW"/>
</dbReference>
<dbReference type="GO" id="GO:0005840">
    <property type="term" value="C:ribosome"/>
    <property type="evidence" value="ECO:0007669"/>
    <property type="project" value="UniProtKB-KW"/>
</dbReference>
<dbReference type="GO" id="GO:0019843">
    <property type="term" value="F:rRNA binding"/>
    <property type="evidence" value="ECO:0007669"/>
    <property type="project" value="UniProtKB-UniRule"/>
</dbReference>
<dbReference type="GO" id="GO:0003735">
    <property type="term" value="F:structural constituent of ribosome"/>
    <property type="evidence" value="ECO:0007669"/>
    <property type="project" value="InterPro"/>
</dbReference>
<dbReference type="GO" id="GO:0006412">
    <property type="term" value="P:translation"/>
    <property type="evidence" value="ECO:0007669"/>
    <property type="project" value="UniProtKB-UniRule"/>
</dbReference>
<dbReference type="Gene3D" id="3.10.430.100">
    <property type="entry name" value="Ribosomal protein L9, C-terminal domain"/>
    <property type="match status" value="1"/>
</dbReference>
<dbReference type="Gene3D" id="3.40.5.10">
    <property type="entry name" value="Ribosomal protein L9, N-terminal domain"/>
    <property type="match status" value="1"/>
</dbReference>
<dbReference type="HAMAP" id="MF_00503">
    <property type="entry name" value="Ribosomal_bL9"/>
    <property type="match status" value="1"/>
</dbReference>
<dbReference type="InterPro" id="IPR000244">
    <property type="entry name" value="Ribosomal_bL9"/>
</dbReference>
<dbReference type="InterPro" id="IPR009027">
    <property type="entry name" value="Ribosomal_bL9/RNase_H1_N"/>
</dbReference>
<dbReference type="InterPro" id="IPR020594">
    <property type="entry name" value="Ribosomal_bL9_bac/chp"/>
</dbReference>
<dbReference type="InterPro" id="IPR020069">
    <property type="entry name" value="Ribosomal_bL9_C"/>
</dbReference>
<dbReference type="InterPro" id="IPR036791">
    <property type="entry name" value="Ribosomal_bL9_C_sf"/>
</dbReference>
<dbReference type="InterPro" id="IPR020070">
    <property type="entry name" value="Ribosomal_bL9_N"/>
</dbReference>
<dbReference type="InterPro" id="IPR036935">
    <property type="entry name" value="Ribosomal_bL9_N_sf"/>
</dbReference>
<dbReference type="NCBIfam" id="TIGR00158">
    <property type="entry name" value="L9"/>
    <property type="match status" value="1"/>
</dbReference>
<dbReference type="PANTHER" id="PTHR21368">
    <property type="entry name" value="50S RIBOSOMAL PROTEIN L9"/>
    <property type="match status" value="1"/>
</dbReference>
<dbReference type="Pfam" id="PF03948">
    <property type="entry name" value="Ribosomal_L9_C"/>
    <property type="match status" value="1"/>
</dbReference>
<dbReference type="Pfam" id="PF01281">
    <property type="entry name" value="Ribosomal_L9_N"/>
    <property type="match status" value="1"/>
</dbReference>
<dbReference type="SUPFAM" id="SSF55658">
    <property type="entry name" value="L9 N-domain-like"/>
    <property type="match status" value="1"/>
</dbReference>
<dbReference type="SUPFAM" id="SSF55653">
    <property type="entry name" value="Ribosomal protein L9 C-domain"/>
    <property type="match status" value="1"/>
</dbReference>
<dbReference type="PROSITE" id="PS00651">
    <property type="entry name" value="RIBOSOMAL_L9"/>
    <property type="match status" value="1"/>
</dbReference>
<feature type="chain" id="PRO_1000126961" description="Large ribosomal subunit protein bL9">
    <location>
        <begin position="1"/>
        <end position="187"/>
    </location>
</feature>
<feature type="region of interest" description="Disordered" evidence="2">
    <location>
        <begin position="155"/>
        <end position="187"/>
    </location>
</feature>
<feature type="compositionally biased region" description="Acidic residues" evidence="2">
    <location>
        <begin position="166"/>
        <end position="187"/>
    </location>
</feature>
<proteinExistence type="inferred from homology"/>
<gene>
    <name evidence="1" type="primary">rplI</name>
    <name type="ordered locus">RC1_1575</name>
</gene>